<organism>
    <name type="scientific">Chlorobium phaeobacteroides (strain DSM 266 / SMG 266 / 2430)</name>
    <dbReference type="NCBI Taxonomy" id="290317"/>
    <lineage>
        <taxon>Bacteria</taxon>
        <taxon>Pseudomonadati</taxon>
        <taxon>Chlorobiota</taxon>
        <taxon>Chlorobiia</taxon>
        <taxon>Chlorobiales</taxon>
        <taxon>Chlorobiaceae</taxon>
        <taxon>Chlorobium/Pelodictyon group</taxon>
        <taxon>Chlorobium</taxon>
    </lineage>
</organism>
<sequence length="64" mass="7496">MPKMKSHRGACKRFKATASGKIKHERMNGSHNLEKKNRKRSRRLHQATILDSAKEKQIRRMILA</sequence>
<keyword id="KW-1185">Reference proteome</keyword>
<keyword id="KW-0687">Ribonucleoprotein</keyword>
<keyword id="KW-0689">Ribosomal protein</keyword>
<evidence type="ECO:0000255" key="1">
    <source>
        <dbReference type="HAMAP-Rule" id="MF_00514"/>
    </source>
</evidence>
<evidence type="ECO:0000256" key="2">
    <source>
        <dbReference type="SAM" id="MobiDB-lite"/>
    </source>
</evidence>
<evidence type="ECO:0000305" key="3"/>
<proteinExistence type="inferred from homology"/>
<reference key="1">
    <citation type="submission" date="2006-12" db="EMBL/GenBank/DDBJ databases">
        <title>Complete sequence of Chlorobium phaeobacteroides DSM 266.</title>
        <authorList>
            <consortium name="US DOE Joint Genome Institute"/>
            <person name="Copeland A."/>
            <person name="Lucas S."/>
            <person name="Lapidus A."/>
            <person name="Barry K."/>
            <person name="Detter J.C."/>
            <person name="Glavina del Rio T."/>
            <person name="Hammon N."/>
            <person name="Israni S."/>
            <person name="Pitluck S."/>
            <person name="Goltsman E."/>
            <person name="Schmutz J."/>
            <person name="Larimer F."/>
            <person name="Land M."/>
            <person name="Hauser L."/>
            <person name="Mikhailova N."/>
            <person name="Li T."/>
            <person name="Overmann J."/>
            <person name="Bryant D.A."/>
            <person name="Richardson P."/>
        </authorList>
    </citation>
    <scope>NUCLEOTIDE SEQUENCE [LARGE SCALE GENOMIC DNA]</scope>
    <source>
        <strain>DSM 266 / SMG 266 / 2430</strain>
    </source>
</reference>
<dbReference type="EMBL" id="CP000492">
    <property type="protein sequence ID" value="ABL66491.1"/>
    <property type="molecule type" value="Genomic_DNA"/>
</dbReference>
<dbReference type="RefSeq" id="WP_011746268.1">
    <property type="nucleotide sequence ID" value="NC_008639.1"/>
</dbReference>
<dbReference type="SMR" id="A1BJB4"/>
<dbReference type="STRING" id="290317.Cpha266_2503"/>
<dbReference type="KEGG" id="cph:Cpha266_2503"/>
<dbReference type="eggNOG" id="COG0291">
    <property type="taxonomic scope" value="Bacteria"/>
</dbReference>
<dbReference type="HOGENOM" id="CLU_169643_4_3_10"/>
<dbReference type="OrthoDB" id="47476at2"/>
<dbReference type="Proteomes" id="UP000008701">
    <property type="component" value="Chromosome"/>
</dbReference>
<dbReference type="GO" id="GO:0022625">
    <property type="term" value="C:cytosolic large ribosomal subunit"/>
    <property type="evidence" value="ECO:0007669"/>
    <property type="project" value="TreeGrafter"/>
</dbReference>
<dbReference type="GO" id="GO:0003735">
    <property type="term" value="F:structural constituent of ribosome"/>
    <property type="evidence" value="ECO:0007669"/>
    <property type="project" value="InterPro"/>
</dbReference>
<dbReference type="GO" id="GO:0006412">
    <property type="term" value="P:translation"/>
    <property type="evidence" value="ECO:0007669"/>
    <property type="project" value="UniProtKB-UniRule"/>
</dbReference>
<dbReference type="FunFam" id="4.10.410.60:FF:000001">
    <property type="entry name" value="50S ribosomal protein L35"/>
    <property type="match status" value="1"/>
</dbReference>
<dbReference type="Gene3D" id="4.10.410.60">
    <property type="match status" value="1"/>
</dbReference>
<dbReference type="HAMAP" id="MF_00514">
    <property type="entry name" value="Ribosomal_bL35"/>
    <property type="match status" value="1"/>
</dbReference>
<dbReference type="InterPro" id="IPR001706">
    <property type="entry name" value="Ribosomal_bL35"/>
</dbReference>
<dbReference type="InterPro" id="IPR021137">
    <property type="entry name" value="Ribosomal_bL35-like"/>
</dbReference>
<dbReference type="InterPro" id="IPR018265">
    <property type="entry name" value="Ribosomal_bL35_CS"/>
</dbReference>
<dbReference type="InterPro" id="IPR037229">
    <property type="entry name" value="Ribosomal_bL35_sf"/>
</dbReference>
<dbReference type="NCBIfam" id="TIGR00001">
    <property type="entry name" value="rpmI_bact"/>
    <property type="match status" value="1"/>
</dbReference>
<dbReference type="PANTHER" id="PTHR33343">
    <property type="entry name" value="54S RIBOSOMAL PROTEIN BL35M"/>
    <property type="match status" value="1"/>
</dbReference>
<dbReference type="PANTHER" id="PTHR33343:SF1">
    <property type="entry name" value="LARGE RIBOSOMAL SUBUNIT PROTEIN BL35M"/>
    <property type="match status" value="1"/>
</dbReference>
<dbReference type="Pfam" id="PF01632">
    <property type="entry name" value="Ribosomal_L35p"/>
    <property type="match status" value="1"/>
</dbReference>
<dbReference type="PRINTS" id="PR00064">
    <property type="entry name" value="RIBOSOMALL35"/>
</dbReference>
<dbReference type="SUPFAM" id="SSF143034">
    <property type="entry name" value="L35p-like"/>
    <property type="match status" value="1"/>
</dbReference>
<dbReference type="PROSITE" id="PS00936">
    <property type="entry name" value="RIBOSOMAL_L35"/>
    <property type="match status" value="1"/>
</dbReference>
<gene>
    <name evidence="1" type="primary">rpmI</name>
    <name type="ordered locus">Cpha266_2503</name>
</gene>
<accession>A1BJB4</accession>
<comment type="similarity">
    <text evidence="1">Belongs to the bacterial ribosomal protein bL35 family.</text>
</comment>
<protein>
    <recommendedName>
        <fullName evidence="1">Large ribosomal subunit protein bL35</fullName>
    </recommendedName>
    <alternativeName>
        <fullName evidence="3">50S ribosomal protein L35</fullName>
    </alternativeName>
</protein>
<feature type="chain" id="PRO_1000050678" description="Large ribosomal subunit protein bL35">
    <location>
        <begin position="1"/>
        <end position="64"/>
    </location>
</feature>
<feature type="region of interest" description="Disordered" evidence="2">
    <location>
        <begin position="27"/>
        <end position="47"/>
    </location>
</feature>
<feature type="compositionally biased region" description="Basic residues" evidence="2">
    <location>
        <begin position="36"/>
        <end position="45"/>
    </location>
</feature>
<name>RL35_CHLPD</name>